<organism>
    <name type="scientific">Vitis vinifera</name>
    <name type="common">Grape</name>
    <dbReference type="NCBI Taxonomy" id="29760"/>
    <lineage>
        <taxon>Eukaryota</taxon>
        <taxon>Viridiplantae</taxon>
        <taxon>Streptophyta</taxon>
        <taxon>Embryophyta</taxon>
        <taxon>Tracheophyta</taxon>
        <taxon>Spermatophyta</taxon>
        <taxon>Magnoliopsida</taxon>
        <taxon>eudicotyledons</taxon>
        <taxon>Gunneridae</taxon>
        <taxon>Pentapetalae</taxon>
        <taxon>rosids</taxon>
        <taxon>Vitales</taxon>
        <taxon>Vitaceae</taxon>
        <taxon>Viteae</taxon>
        <taxon>Vitis</taxon>
    </lineage>
</organism>
<keyword id="KW-0150">Chloroplast</keyword>
<keyword id="KW-0934">Plastid</keyword>
<keyword id="KW-1185">Reference proteome</keyword>
<accession>Q0ZIV7</accession>
<comment type="subcellular location">
    <subcellularLocation>
        <location>Plastid</location>
        <location>Chloroplast</location>
    </subcellularLocation>
</comment>
<comment type="similarity">
    <text evidence="1">Belongs to the ycf15 family.</text>
</comment>
<comment type="caution">
    <text evidence="1">Could be the product of a pseudogene.</text>
</comment>
<name>YCF15_VITVI</name>
<proteinExistence type="uncertain"/>
<protein>
    <recommendedName>
        <fullName>Putative uncharacterized protein ycf15</fullName>
    </recommendedName>
</protein>
<feature type="chain" id="PRO_0000360394" description="Putative uncharacterized protein ycf15">
    <location>
        <begin position="1"/>
        <end position="77"/>
    </location>
</feature>
<dbReference type="EMBL" id="DQ424856">
    <property type="protein sequence ID" value="ABE47578.1"/>
    <property type="molecule type" value="Genomic_DNA"/>
</dbReference>
<dbReference type="EMBL" id="DQ424856">
    <property type="protein sequence ID" value="ABE47597.1"/>
    <property type="molecule type" value="Genomic_DNA"/>
</dbReference>
<dbReference type="STRING" id="29760.Q0ZIV7"/>
<dbReference type="InParanoid" id="Q0ZIV7"/>
<dbReference type="Proteomes" id="UP000009183">
    <property type="component" value="Chloroplast"/>
</dbReference>
<dbReference type="GO" id="GO:0009507">
    <property type="term" value="C:chloroplast"/>
    <property type="evidence" value="ECO:0007669"/>
    <property type="project" value="UniProtKB-SubCell"/>
</dbReference>
<dbReference type="InterPro" id="IPR019645">
    <property type="entry name" value="Uncharacterised_Ycf15"/>
</dbReference>
<dbReference type="Pfam" id="PF10705">
    <property type="entry name" value="Ycf15"/>
    <property type="match status" value="1"/>
</dbReference>
<gene>
    <name type="primary">ycf15-A</name>
</gene>
<gene>
    <name type="primary">ycf15-B</name>
</gene>
<evidence type="ECO:0000305" key="1"/>
<reference key="1">
    <citation type="journal article" date="2006" name="BMC Evol. Biol.">
        <title>Phylogenetic analyses of Vitis (Vitaceae) based on complete chloroplast genome sequences: effects of taxon sampling and phylogenetic methods on resolving relationships among rosids.</title>
        <authorList>
            <person name="Jansen R.K."/>
            <person name="Kaittanis C."/>
            <person name="Lee S.-B."/>
            <person name="Saski C."/>
            <person name="Tomkins J."/>
            <person name="Alverson A.J."/>
            <person name="Daniell H."/>
        </authorList>
    </citation>
    <scope>NUCLEOTIDE SEQUENCE [LARGE SCALE GENOMIC DNA]</scope>
    <source>
        <strain>cv. Maxxa</strain>
    </source>
</reference>
<sequence length="77" mass="9304">MLLLKHGRIEILDQNTMYGWYKLPKQEFLNSEQPEPITHYIKKFPLMKDVNPLENQKYACLMKWLLLSAPITNHWFN</sequence>
<geneLocation type="chloroplast"/>